<gene>
    <name evidence="1" type="primary">cysG</name>
    <name type="ordered locus">EcolC_0344</name>
</gene>
<name>CYSG_ECOLC</name>
<feature type="chain" id="PRO_1000088218" description="Siroheme synthase">
    <location>
        <begin position="1"/>
        <end position="457"/>
    </location>
</feature>
<feature type="region of interest" description="Precorrin-2 dehydrogenase /sirohydrochlorin ferrochelatase" evidence="1">
    <location>
        <begin position="1"/>
        <end position="204"/>
    </location>
</feature>
<feature type="region of interest" description="Uroporphyrinogen-III C-methyltransferase" evidence="1">
    <location>
        <begin position="216"/>
        <end position="457"/>
    </location>
</feature>
<feature type="active site" description="Proton acceptor" evidence="1">
    <location>
        <position position="248"/>
    </location>
</feature>
<feature type="active site" description="Proton donor" evidence="1">
    <location>
        <position position="270"/>
    </location>
</feature>
<feature type="binding site" evidence="1">
    <location>
        <begin position="22"/>
        <end position="23"/>
    </location>
    <ligand>
        <name>NAD(+)</name>
        <dbReference type="ChEBI" id="CHEBI:57540"/>
    </ligand>
</feature>
<feature type="binding site" evidence="1">
    <location>
        <begin position="43"/>
        <end position="44"/>
    </location>
    <ligand>
        <name>NAD(+)</name>
        <dbReference type="ChEBI" id="CHEBI:57540"/>
    </ligand>
</feature>
<feature type="binding site" evidence="1">
    <location>
        <position position="225"/>
    </location>
    <ligand>
        <name>S-adenosyl-L-methionine</name>
        <dbReference type="ChEBI" id="CHEBI:59789"/>
    </ligand>
</feature>
<feature type="binding site" evidence="1">
    <location>
        <begin position="301"/>
        <end position="303"/>
    </location>
    <ligand>
        <name>S-adenosyl-L-methionine</name>
        <dbReference type="ChEBI" id="CHEBI:59789"/>
    </ligand>
</feature>
<feature type="binding site" evidence="1">
    <location>
        <position position="306"/>
    </location>
    <ligand>
        <name>S-adenosyl-L-methionine</name>
        <dbReference type="ChEBI" id="CHEBI:59789"/>
    </ligand>
</feature>
<feature type="binding site" evidence="1">
    <location>
        <begin position="331"/>
        <end position="332"/>
    </location>
    <ligand>
        <name>S-adenosyl-L-methionine</name>
        <dbReference type="ChEBI" id="CHEBI:59789"/>
    </ligand>
</feature>
<feature type="binding site" evidence="1">
    <location>
        <position position="382"/>
    </location>
    <ligand>
        <name>S-adenosyl-L-methionine</name>
        <dbReference type="ChEBI" id="CHEBI:59789"/>
    </ligand>
</feature>
<feature type="binding site" evidence="1">
    <location>
        <position position="411"/>
    </location>
    <ligand>
        <name>S-adenosyl-L-methionine</name>
        <dbReference type="ChEBI" id="CHEBI:59789"/>
    </ligand>
</feature>
<feature type="modified residue" description="Phosphoserine" evidence="1">
    <location>
        <position position="128"/>
    </location>
</feature>
<keyword id="KW-0169">Cobalamin biosynthesis</keyword>
<keyword id="KW-0456">Lyase</keyword>
<keyword id="KW-0489">Methyltransferase</keyword>
<keyword id="KW-0511">Multifunctional enzyme</keyword>
<keyword id="KW-0520">NAD</keyword>
<keyword id="KW-0560">Oxidoreductase</keyword>
<keyword id="KW-0597">Phosphoprotein</keyword>
<keyword id="KW-0627">Porphyrin biosynthesis</keyword>
<keyword id="KW-0949">S-adenosyl-L-methionine</keyword>
<keyword id="KW-0808">Transferase</keyword>
<proteinExistence type="inferred from homology"/>
<dbReference type="EC" id="2.1.1.107" evidence="1"/>
<dbReference type="EC" id="1.3.1.76" evidence="1"/>
<dbReference type="EC" id="4.99.1.4" evidence="1"/>
<dbReference type="EMBL" id="CP000946">
    <property type="protein sequence ID" value="ACA76022.1"/>
    <property type="molecule type" value="Genomic_DNA"/>
</dbReference>
<dbReference type="RefSeq" id="WP_000349855.1">
    <property type="nucleotide sequence ID" value="NZ_MTFT01000001.1"/>
</dbReference>
<dbReference type="SMR" id="B1IP96"/>
<dbReference type="GeneID" id="75173526"/>
<dbReference type="KEGG" id="ecl:EcolC_0344"/>
<dbReference type="HOGENOM" id="CLU_011276_2_0_6"/>
<dbReference type="UniPathway" id="UPA00148">
    <property type="reaction ID" value="UER00211"/>
</dbReference>
<dbReference type="UniPathway" id="UPA00148">
    <property type="reaction ID" value="UER00222"/>
</dbReference>
<dbReference type="UniPathway" id="UPA00262">
    <property type="reaction ID" value="UER00211"/>
</dbReference>
<dbReference type="UniPathway" id="UPA00262">
    <property type="reaction ID" value="UER00222"/>
</dbReference>
<dbReference type="UniPathway" id="UPA00262">
    <property type="reaction ID" value="UER00376"/>
</dbReference>
<dbReference type="GO" id="GO:0051287">
    <property type="term" value="F:NAD binding"/>
    <property type="evidence" value="ECO:0007669"/>
    <property type="project" value="InterPro"/>
</dbReference>
<dbReference type="GO" id="GO:0043115">
    <property type="term" value="F:precorrin-2 dehydrogenase activity"/>
    <property type="evidence" value="ECO:0007669"/>
    <property type="project" value="UniProtKB-UniRule"/>
</dbReference>
<dbReference type="GO" id="GO:0051266">
    <property type="term" value="F:sirohydrochlorin ferrochelatase activity"/>
    <property type="evidence" value="ECO:0007669"/>
    <property type="project" value="UniProtKB-EC"/>
</dbReference>
<dbReference type="GO" id="GO:0004851">
    <property type="term" value="F:uroporphyrin-III C-methyltransferase activity"/>
    <property type="evidence" value="ECO:0007669"/>
    <property type="project" value="UniProtKB-UniRule"/>
</dbReference>
<dbReference type="GO" id="GO:0009236">
    <property type="term" value="P:cobalamin biosynthetic process"/>
    <property type="evidence" value="ECO:0007669"/>
    <property type="project" value="UniProtKB-UniRule"/>
</dbReference>
<dbReference type="GO" id="GO:0032259">
    <property type="term" value="P:methylation"/>
    <property type="evidence" value="ECO:0007669"/>
    <property type="project" value="UniProtKB-KW"/>
</dbReference>
<dbReference type="GO" id="GO:0019354">
    <property type="term" value="P:siroheme biosynthetic process"/>
    <property type="evidence" value="ECO:0007669"/>
    <property type="project" value="UniProtKB-UniRule"/>
</dbReference>
<dbReference type="CDD" id="cd11642">
    <property type="entry name" value="SUMT"/>
    <property type="match status" value="1"/>
</dbReference>
<dbReference type="FunFam" id="1.10.8.210:FF:000001">
    <property type="entry name" value="Siroheme synthase"/>
    <property type="match status" value="1"/>
</dbReference>
<dbReference type="FunFam" id="3.30.160.110:FF:000001">
    <property type="entry name" value="Siroheme synthase"/>
    <property type="match status" value="1"/>
</dbReference>
<dbReference type="FunFam" id="3.30.950.10:FF:000001">
    <property type="entry name" value="Siroheme synthase"/>
    <property type="match status" value="1"/>
</dbReference>
<dbReference type="FunFam" id="3.40.1010.10:FF:000001">
    <property type="entry name" value="Siroheme synthase"/>
    <property type="match status" value="1"/>
</dbReference>
<dbReference type="FunFam" id="3.40.50.720:FF:000092">
    <property type="entry name" value="Siroheme synthase"/>
    <property type="match status" value="1"/>
</dbReference>
<dbReference type="Gene3D" id="3.40.1010.10">
    <property type="entry name" value="Cobalt-precorrin-4 Transmethylase, Domain 1"/>
    <property type="match status" value="1"/>
</dbReference>
<dbReference type="Gene3D" id="3.30.950.10">
    <property type="entry name" value="Methyltransferase, Cobalt-precorrin-4 Transmethylase, Domain 2"/>
    <property type="match status" value="1"/>
</dbReference>
<dbReference type="Gene3D" id="3.40.50.720">
    <property type="entry name" value="NAD(P)-binding Rossmann-like Domain"/>
    <property type="match status" value="1"/>
</dbReference>
<dbReference type="Gene3D" id="1.10.8.210">
    <property type="entry name" value="Sirohaem synthase, dimerisation domain"/>
    <property type="match status" value="1"/>
</dbReference>
<dbReference type="Gene3D" id="3.30.160.110">
    <property type="entry name" value="Siroheme synthase, domain 2"/>
    <property type="match status" value="1"/>
</dbReference>
<dbReference type="HAMAP" id="MF_01646">
    <property type="entry name" value="Siroheme_synth"/>
    <property type="match status" value="1"/>
</dbReference>
<dbReference type="InterPro" id="IPR000878">
    <property type="entry name" value="4pyrrol_Mease"/>
</dbReference>
<dbReference type="InterPro" id="IPR035996">
    <property type="entry name" value="4pyrrol_Methylase_sf"/>
</dbReference>
<dbReference type="InterPro" id="IPR014777">
    <property type="entry name" value="4pyrrole_Mease_sub1"/>
</dbReference>
<dbReference type="InterPro" id="IPR014776">
    <property type="entry name" value="4pyrrole_Mease_sub2"/>
</dbReference>
<dbReference type="InterPro" id="IPR006366">
    <property type="entry name" value="CobA/CysG_C"/>
</dbReference>
<dbReference type="InterPro" id="IPR036291">
    <property type="entry name" value="NAD(P)-bd_dom_sf"/>
</dbReference>
<dbReference type="InterPro" id="IPR050161">
    <property type="entry name" value="Siro_Cobalamin_biosynth"/>
</dbReference>
<dbReference type="InterPro" id="IPR037115">
    <property type="entry name" value="Sirohaem_synt_dimer_dom_sf"/>
</dbReference>
<dbReference type="InterPro" id="IPR012409">
    <property type="entry name" value="Sirohaem_synth"/>
</dbReference>
<dbReference type="InterPro" id="IPR028281">
    <property type="entry name" value="Sirohaem_synthase_central"/>
</dbReference>
<dbReference type="InterPro" id="IPR019478">
    <property type="entry name" value="Sirohaem_synthase_dimer_dom"/>
</dbReference>
<dbReference type="InterPro" id="IPR006367">
    <property type="entry name" value="Sirohaem_synthase_N"/>
</dbReference>
<dbReference type="InterPro" id="IPR003043">
    <property type="entry name" value="Uropor_MeTrfase_CS"/>
</dbReference>
<dbReference type="NCBIfam" id="TIGR01469">
    <property type="entry name" value="cobA_cysG_Cterm"/>
    <property type="match status" value="1"/>
</dbReference>
<dbReference type="NCBIfam" id="TIGR01470">
    <property type="entry name" value="cysG_Nterm"/>
    <property type="match status" value="1"/>
</dbReference>
<dbReference type="NCBIfam" id="NF004790">
    <property type="entry name" value="PRK06136.1"/>
    <property type="match status" value="1"/>
</dbReference>
<dbReference type="NCBIfam" id="NF007922">
    <property type="entry name" value="PRK10637.1"/>
    <property type="match status" value="1"/>
</dbReference>
<dbReference type="PANTHER" id="PTHR45790:SF1">
    <property type="entry name" value="SIROHEME SYNTHASE"/>
    <property type="match status" value="1"/>
</dbReference>
<dbReference type="PANTHER" id="PTHR45790">
    <property type="entry name" value="SIROHEME SYNTHASE-RELATED"/>
    <property type="match status" value="1"/>
</dbReference>
<dbReference type="Pfam" id="PF10414">
    <property type="entry name" value="CysG_dimeriser"/>
    <property type="match status" value="1"/>
</dbReference>
<dbReference type="Pfam" id="PF13241">
    <property type="entry name" value="NAD_binding_7"/>
    <property type="match status" value="1"/>
</dbReference>
<dbReference type="Pfam" id="PF14824">
    <property type="entry name" value="Sirohm_synth_M"/>
    <property type="match status" value="1"/>
</dbReference>
<dbReference type="Pfam" id="PF00590">
    <property type="entry name" value="TP_methylase"/>
    <property type="match status" value="1"/>
</dbReference>
<dbReference type="PIRSF" id="PIRSF036426">
    <property type="entry name" value="Sirohaem_synth"/>
    <property type="match status" value="1"/>
</dbReference>
<dbReference type="SUPFAM" id="SSF51735">
    <property type="entry name" value="NAD(P)-binding Rossmann-fold domains"/>
    <property type="match status" value="1"/>
</dbReference>
<dbReference type="SUPFAM" id="SSF75615">
    <property type="entry name" value="Siroheme synthase middle domains-like"/>
    <property type="match status" value="1"/>
</dbReference>
<dbReference type="SUPFAM" id="SSF53790">
    <property type="entry name" value="Tetrapyrrole methylase"/>
    <property type="match status" value="1"/>
</dbReference>
<dbReference type="PROSITE" id="PS00839">
    <property type="entry name" value="SUMT_1"/>
    <property type="match status" value="1"/>
</dbReference>
<dbReference type="PROSITE" id="PS00840">
    <property type="entry name" value="SUMT_2"/>
    <property type="match status" value="1"/>
</dbReference>
<accession>B1IP96</accession>
<comment type="function">
    <text evidence="1">Multifunctional enzyme that catalyzes the SAM-dependent methylations of uroporphyrinogen III at position C-2 and C-7 to form precorrin-2 via precorrin-1. Then it catalyzes the NAD-dependent ring dehydrogenation of precorrin-2 to yield sirohydrochlorin. Finally, it catalyzes the ferrochelation of sirohydrochlorin to yield siroheme.</text>
</comment>
<comment type="catalytic activity">
    <reaction evidence="1">
        <text>uroporphyrinogen III + 2 S-adenosyl-L-methionine = precorrin-2 + 2 S-adenosyl-L-homocysteine + H(+)</text>
        <dbReference type="Rhea" id="RHEA:32459"/>
        <dbReference type="ChEBI" id="CHEBI:15378"/>
        <dbReference type="ChEBI" id="CHEBI:57308"/>
        <dbReference type="ChEBI" id="CHEBI:57856"/>
        <dbReference type="ChEBI" id="CHEBI:58827"/>
        <dbReference type="ChEBI" id="CHEBI:59789"/>
        <dbReference type="EC" id="2.1.1.107"/>
    </reaction>
</comment>
<comment type="catalytic activity">
    <reaction evidence="1">
        <text>precorrin-2 + NAD(+) = sirohydrochlorin + NADH + 2 H(+)</text>
        <dbReference type="Rhea" id="RHEA:15613"/>
        <dbReference type="ChEBI" id="CHEBI:15378"/>
        <dbReference type="ChEBI" id="CHEBI:57540"/>
        <dbReference type="ChEBI" id="CHEBI:57945"/>
        <dbReference type="ChEBI" id="CHEBI:58351"/>
        <dbReference type="ChEBI" id="CHEBI:58827"/>
        <dbReference type="EC" id="1.3.1.76"/>
    </reaction>
</comment>
<comment type="catalytic activity">
    <reaction evidence="1">
        <text>siroheme + 2 H(+) = sirohydrochlorin + Fe(2+)</text>
        <dbReference type="Rhea" id="RHEA:24360"/>
        <dbReference type="ChEBI" id="CHEBI:15378"/>
        <dbReference type="ChEBI" id="CHEBI:29033"/>
        <dbReference type="ChEBI" id="CHEBI:58351"/>
        <dbReference type="ChEBI" id="CHEBI:60052"/>
        <dbReference type="EC" id="4.99.1.4"/>
    </reaction>
</comment>
<comment type="pathway">
    <text evidence="1">Cofactor biosynthesis; adenosylcobalamin biosynthesis; precorrin-2 from uroporphyrinogen III: step 1/1.</text>
</comment>
<comment type="pathway">
    <text evidence="1">Cofactor biosynthesis; adenosylcobalamin biosynthesis; sirohydrochlorin from precorrin-2: step 1/1.</text>
</comment>
<comment type="pathway">
    <text evidence="1">Porphyrin-containing compound metabolism; siroheme biosynthesis; precorrin-2 from uroporphyrinogen III: step 1/1.</text>
</comment>
<comment type="pathway">
    <text evidence="1">Porphyrin-containing compound metabolism; siroheme biosynthesis; siroheme from sirohydrochlorin: step 1/1.</text>
</comment>
<comment type="pathway">
    <text evidence="1">Porphyrin-containing compound metabolism; siroheme biosynthesis; sirohydrochlorin from precorrin-2: step 1/1.</text>
</comment>
<comment type="similarity">
    <text evidence="1">In the N-terminal section; belongs to the precorrin-2 dehydrogenase / sirohydrochlorin ferrochelatase family.</text>
</comment>
<comment type="similarity">
    <text evidence="1">In the C-terminal section; belongs to the precorrin methyltransferase family.</text>
</comment>
<reference key="1">
    <citation type="submission" date="2008-02" db="EMBL/GenBank/DDBJ databases">
        <title>Complete sequence of Escherichia coli C str. ATCC 8739.</title>
        <authorList>
            <person name="Copeland A."/>
            <person name="Lucas S."/>
            <person name="Lapidus A."/>
            <person name="Glavina del Rio T."/>
            <person name="Dalin E."/>
            <person name="Tice H."/>
            <person name="Bruce D."/>
            <person name="Goodwin L."/>
            <person name="Pitluck S."/>
            <person name="Kiss H."/>
            <person name="Brettin T."/>
            <person name="Detter J.C."/>
            <person name="Han C."/>
            <person name="Kuske C.R."/>
            <person name="Schmutz J."/>
            <person name="Larimer F."/>
            <person name="Land M."/>
            <person name="Hauser L."/>
            <person name="Kyrpides N."/>
            <person name="Mikhailova N."/>
            <person name="Ingram L."/>
            <person name="Richardson P."/>
        </authorList>
    </citation>
    <scope>NUCLEOTIDE SEQUENCE [LARGE SCALE GENOMIC DNA]</scope>
    <source>
        <strain>ATCC 8739 / DSM 1576 / NBRC 3972 / NCIMB 8545 / WDCM 00012 / Crooks</strain>
    </source>
</reference>
<protein>
    <recommendedName>
        <fullName evidence="1">Siroheme synthase</fullName>
    </recommendedName>
    <domain>
        <recommendedName>
            <fullName evidence="1">Uroporphyrinogen-III C-methyltransferase</fullName>
            <shortName evidence="1">Urogen III methylase</shortName>
            <ecNumber evidence="1">2.1.1.107</ecNumber>
        </recommendedName>
        <alternativeName>
            <fullName evidence="1">SUMT</fullName>
        </alternativeName>
        <alternativeName>
            <fullName evidence="1">Uroporphyrinogen III methylase</fullName>
            <shortName evidence="1">UROM</shortName>
        </alternativeName>
    </domain>
    <domain>
        <recommendedName>
            <fullName evidence="1">Precorrin-2 dehydrogenase</fullName>
            <ecNumber evidence="1">1.3.1.76</ecNumber>
        </recommendedName>
    </domain>
    <domain>
        <recommendedName>
            <fullName evidence="1">Sirohydrochlorin ferrochelatase</fullName>
            <ecNumber evidence="1">4.99.1.4</ecNumber>
        </recommendedName>
    </domain>
</protein>
<sequence length="457" mass="49951">MDHLPIFCQLRDRDCLIVGGGDVAERKARLLLDAGARLTVNALAFIPQFTAWADAGMLTLVEGPFDESLLDTCWLAIAATDDDALNQRVSEAAEARRIFCNVVDAPKAASFIMPSIIDRSPLMVAVSSGGTSPVLARLLREKLESLLPLHLGQVAKYAGQLRGRVKQQFATMGERRRFWEKLFVNDRLAQSLANNDQKAITETTEQLINEPLDHRGEVVLVGAGPGDAGLLTLKGLQQIQQADVVVYDRLVSDDIMNLVRRDADRVFVGKRAGYHCVPQEEINQILLREAQKGKRVVRLKGGDPFIFGRGGEELETLCNAGIPFSVVPGITAASGCSAYSGIPLTHRDYAQSVRLITGHLKTGGELDWENLAAEKQTLVFYMGLNQAATIQQKLIEHGMPGEMPVAIVENGTAVTQRVIDGTLTQLGELAQQMNSPSLIIIGRVVGLRDKLNWFSNH</sequence>
<evidence type="ECO:0000255" key="1">
    <source>
        <dbReference type="HAMAP-Rule" id="MF_01646"/>
    </source>
</evidence>
<organism>
    <name type="scientific">Escherichia coli (strain ATCC 8739 / DSM 1576 / NBRC 3972 / NCIMB 8545 / WDCM 00012 / Crooks)</name>
    <dbReference type="NCBI Taxonomy" id="481805"/>
    <lineage>
        <taxon>Bacteria</taxon>
        <taxon>Pseudomonadati</taxon>
        <taxon>Pseudomonadota</taxon>
        <taxon>Gammaproteobacteria</taxon>
        <taxon>Enterobacterales</taxon>
        <taxon>Enterobacteriaceae</taxon>
        <taxon>Escherichia</taxon>
    </lineage>
</organism>